<proteinExistence type="evidence at transcript level"/>
<dbReference type="EC" id="1.7.-.-" evidence="2"/>
<dbReference type="EMBL" id="AAEX02019441">
    <property type="status" value="NOT_ANNOTATED_CDS"/>
    <property type="molecule type" value="Genomic_DNA"/>
</dbReference>
<dbReference type="EMBL" id="BN000826">
    <property type="protein sequence ID" value="CAJ30484.1"/>
    <property type="molecule type" value="mRNA"/>
</dbReference>
<dbReference type="RefSeq" id="NP_001003356.2">
    <property type="nucleotide sequence ID" value="NM_001003356.2"/>
</dbReference>
<dbReference type="SMR" id="Q6WZ18"/>
<dbReference type="FunCoup" id="Q6WZ18">
    <property type="interactions" value="3"/>
</dbReference>
<dbReference type="STRING" id="9615.ENSCAFP00000025285"/>
<dbReference type="PaxDb" id="9612-ENSCAFP00000025285"/>
<dbReference type="Ensembl" id="ENSCAFT00000027186.5">
    <property type="protein sequence ID" value="ENSCAFP00000025285.5"/>
    <property type="gene ID" value="ENSCAFG00000017168.6"/>
</dbReference>
<dbReference type="Ensembl" id="ENSCAFT00030010601.1">
    <property type="protein sequence ID" value="ENSCAFP00030009272.1"/>
    <property type="gene ID" value="ENSCAFG00030005785.1"/>
</dbReference>
<dbReference type="Ensembl" id="ENSCAFT00040031172.1">
    <property type="protein sequence ID" value="ENSCAFP00040027094.1"/>
    <property type="gene ID" value="ENSCAFG00040016885.1"/>
</dbReference>
<dbReference type="Ensembl" id="ENSCAFT00845011498.1">
    <property type="protein sequence ID" value="ENSCAFP00845008982.1"/>
    <property type="gene ID" value="ENSCAFG00845006478.1"/>
</dbReference>
<dbReference type="GeneID" id="442944"/>
<dbReference type="KEGG" id="cfa:442944"/>
<dbReference type="CTD" id="58157"/>
<dbReference type="VEuPathDB" id="HostDB:ENSCAFG00845006478"/>
<dbReference type="VGNC" id="VGNC:43793">
    <property type="gene designation" value="NGB"/>
</dbReference>
<dbReference type="eggNOG" id="KOG3378">
    <property type="taxonomic scope" value="Eukaryota"/>
</dbReference>
<dbReference type="GeneTree" id="ENSGT00510000048375"/>
<dbReference type="InParanoid" id="Q6WZ18"/>
<dbReference type="OrthoDB" id="436496at2759"/>
<dbReference type="Reactome" id="R-CFA-8981607">
    <property type="pathway name" value="Intracellular oxygen transport"/>
</dbReference>
<dbReference type="Proteomes" id="UP000002254">
    <property type="component" value="Chromosome 8"/>
</dbReference>
<dbReference type="Proteomes" id="UP000694429">
    <property type="component" value="Chromosome 8"/>
</dbReference>
<dbReference type="Proteomes" id="UP000694542">
    <property type="component" value="Chromosome 8"/>
</dbReference>
<dbReference type="Proteomes" id="UP000805418">
    <property type="component" value="Chromosome 8"/>
</dbReference>
<dbReference type="GO" id="GO:0005829">
    <property type="term" value="C:cytosol"/>
    <property type="evidence" value="ECO:0007669"/>
    <property type="project" value="UniProtKB-SubCell"/>
</dbReference>
<dbReference type="GO" id="GO:0005759">
    <property type="term" value="C:mitochondrial matrix"/>
    <property type="evidence" value="ECO:0007669"/>
    <property type="project" value="UniProtKB-SubCell"/>
</dbReference>
<dbReference type="GO" id="GO:0005092">
    <property type="term" value="F:GDP-dissociation inhibitor activity"/>
    <property type="evidence" value="ECO:0000250"/>
    <property type="project" value="UniProtKB"/>
</dbReference>
<dbReference type="GO" id="GO:0020037">
    <property type="term" value="F:heme binding"/>
    <property type="evidence" value="ECO:0007669"/>
    <property type="project" value="InterPro"/>
</dbReference>
<dbReference type="GO" id="GO:0046872">
    <property type="term" value="F:metal ion binding"/>
    <property type="evidence" value="ECO:0007669"/>
    <property type="project" value="UniProtKB-KW"/>
</dbReference>
<dbReference type="GO" id="GO:0098809">
    <property type="term" value="F:nitrite reductase activity"/>
    <property type="evidence" value="ECO:0000250"/>
    <property type="project" value="UniProtKB"/>
</dbReference>
<dbReference type="GO" id="GO:0019825">
    <property type="term" value="F:oxygen binding"/>
    <property type="evidence" value="ECO:0000250"/>
    <property type="project" value="UniProtKB"/>
</dbReference>
<dbReference type="GO" id="GO:0005344">
    <property type="term" value="F:oxygen carrier activity"/>
    <property type="evidence" value="ECO:0007669"/>
    <property type="project" value="Ensembl"/>
</dbReference>
<dbReference type="GO" id="GO:0071456">
    <property type="term" value="P:cellular response to hypoxia"/>
    <property type="evidence" value="ECO:0000250"/>
    <property type="project" value="UniProtKB"/>
</dbReference>
<dbReference type="CDD" id="cd08920">
    <property type="entry name" value="Ngb"/>
    <property type="match status" value="1"/>
</dbReference>
<dbReference type="FunFam" id="1.10.490.10:FF:000006">
    <property type="entry name" value="Neuroglobin"/>
    <property type="match status" value="1"/>
</dbReference>
<dbReference type="Gene3D" id="1.10.490.10">
    <property type="entry name" value="Globins"/>
    <property type="match status" value="1"/>
</dbReference>
<dbReference type="InterPro" id="IPR000971">
    <property type="entry name" value="Globin"/>
</dbReference>
<dbReference type="InterPro" id="IPR050532">
    <property type="entry name" value="Globin-like_OT"/>
</dbReference>
<dbReference type="InterPro" id="IPR009050">
    <property type="entry name" value="Globin-like_sf"/>
</dbReference>
<dbReference type="InterPro" id="IPR012292">
    <property type="entry name" value="Globin/Proto"/>
</dbReference>
<dbReference type="PANTHER" id="PTHR46458">
    <property type="entry name" value="BLR2807 PROTEIN"/>
    <property type="match status" value="1"/>
</dbReference>
<dbReference type="PANTHER" id="PTHR46458:SF19">
    <property type="entry name" value="NEUROGLOBIN"/>
    <property type="match status" value="1"/>
</dbReference>
<dbReference type="Pfam" id="PF00042">
    <property type="entry name" value="Globin"/>
    <property type="match status" value="1"/>
</dbReference>
<dbReference type="SUPFAM" id="SSF46458">
    <property type="entry name" value="Globin-like"/>
    <property type="match status" value="1"/>
</dbReference>
<dbReference type="PROSITE" id="PS01033">
    <property type="entry name" value="GLOBIN"/>
    <property type="match status" value="1"/>
</dbReference>
<sequence length="151" mass="17003">MERPEPELIRQSWRAVRRSPLEHGTVLFARLFDLEPDLLPLFQYNCRQFSSPEDCLSSPEFLDHIRKVMLVIDTAVTNVEDLSSLEEYLAGLGKKHRAVGVKLSSFSTVGESLLYMLEKCLGPAFTPAVRAAWSQLYGAVVQAMSRGWDGD</sequence>
<accession>Q6WZ18</accession>
<accession>Q3KN65</accession>
<name>NGB_CANLF</name>
<reference key="1">
    <citation type="journal article" date="2005" name="Nature">
        <title>Genome sequence, comparative analysis and haplotype structure of the domestic dog.</title>
        <authorList>
            <person name="Lindblad-Toh K."/>
            <person name="Wade C.M."/>
            <person name="Mikkelsen T.S."/>
            <person name="Karlsson E.K."/>
            <person name="Jaffe D.B."/>
            <person name="Kamal M."/>
            <person name="Clamp M."/>
            <person name="Chang J.L."/>
            <person name="Kulbokas E.J. III"/>
            <person name="Zody M.C."/>
            <person name="Mauceli E."/>
            <person name="Xie X."/>
            <person name="Breen M."/>
            <person name="Wayne R.K."/>
            <person name="Ostrander E.A."/>
            <person name="Ponting C.P."/>
            <person name="Galibert F."/>
            <person name="Smith D.R."/>
            <person name="deJong P.J."/>
            <person name="Kirkness E.F."/>
            <person name="Alvarez P."/>
            <person name="Biagi T."/>
            <person name="Brockman W."/>
            <person name="Butler J."/>
            <person name="Chin C.-W."/>
            <person name="Cook A."/>
            <person name="Cuff J."/>
            <person name="Daly M.J."/>
            <person name="DeCaprio D."/>
            <person name="Gnerre S."/>
            <person name="Grabherr M."/>
            <person name="Kellis M."/>
            <person name="Kleber M."/>
            <person name="Bardeleben C."/>
            <person name="Goodstadt L."/>
            <person name="Heger A."/>
            <person name="Hitte C."/>
            <person name="Kim L."/>
            <person name="Koepfli K.-P."/>
            <person name="Parker H.G."/>
            <person name="Pollinger J.P."/>
            <person name="Searle S.M.J."/>
            <person name="Sutter N.B."/>
            <person name="Thomas R."/>
            <person name="Webber C."/>
            <person name="Baldwin J."/>
            <person name="Abebe A."/>
            <person name="Abouelleil A."/>
            <person name="Aftuck L."/>
            <person name="Ait-Zahra M."/>
            <person name="Aldredge T."/>
            <person name="Allen N."/>
            <person name="An P."/>
            <person name="Anderson S."/>
            <person name="Antoine C."/>
            <person name="Arachchi H."/>
            <person name="Aslam A."/>
            <person name="Ayotte L."/>
            <person name="Bachantsang P."/>
            <person name="Barry A."/>
            <person name="Bayul T."/>
            <person name="Benamara M."/>
            <person name="Berlin A."/>
            <person name="Bessette D."/>
            <person name="Blitshteyn B."/>
            <person name="Bloom T."/>
            <person name="Blye J."/>
            <person name="Boguslavskiy L."/>
            <person name="Bonnet C."/>
            <person name="Boukhgalter B."/>
            <person name="Brown A."/>
            <person name="Cahill P."/>
            <person name="Calixte N."/>
            <person name="Camarata J."/>
            <person name="Cheshatsang Y."/>
            <person name="Chu J."/>
            <person name="Citroen M."/>
            <person name="Collymore A."/>
            <person name="Cooke P."/>
            <person name="Dawoe T."/>
            <person name="Daza R."/>
            <person name="Decktor K."/>
            <person name="DeGray S."/>
            <person name="Dhargay N."/>
            <person name="Dooley K."/>
            <person name="Dooley K."/>
            <person name="Dorje P."/>
            <person name="Dorjee K."/>
            <person name="Dorris L."/>
            <person name="Duffey N."/>
            <person name="Dupes A."/>
            <person name="Egbiremolen O."/>
            <person name="Elong R."/>
            <person name="Falk J."/>
            <person name="Farina A."/>
            <person name="Faro S."/>
            <person name="Ferguson D."/>
            <person name="Ferreira P."/>
            <person name="Fisher S."/>
            <person name="FitzGerald M."/>
            <person name="Foley K."/>
            <person name="Foley C."/>
            <person name="Franke A."/>
            <person name="Friedrich D."/>
            <person name="Gage D."/>
            <person name="Garber M."/>
            <person name="Gearin G."/>
            <person name="Giannoukos G."/>
            <person name="Goode T."/>
            <person name="Goyette A."/>
            <person name="Graham J."/>
            <person name="Grandbois E."/>
            <person name="Gyaltsen K."/>
            <person name="Hafez N."/>
            <person name="Hagopian D."/>
            <person name="Hagos B."/>
            <person name="Hall J."/>
            <person name="Healy C."/>
            <person name="Hegarty R."/>
            <person name="Honan T."/>
            <person name="Horn A."/>
            <person name="Houde N."/>
            <person name="Hughes L."/>
            <person name="Hunnicutt L."/>
            <person name="Husby M."/>
            <person name="Jester B."/>
            <person name="Jones C."/>
            <person name="Kamat A."/>
            <person name="Kanga B."/>
            <person name="Kells C."/>
            <person name="Khazanovich D."/>
            <person name="Kieu A.C."/>
            <person name="Kisner P."/>
            <person name="Kumar M."/>
            <person name="Lance K."/>
            <person name="Landers T."/>
            <person name="Lara M."/>
            <person name="Lee W."/>
            <person name="Leger J.-P."/>
            <person name="Lennon N."/>
            <person name="Leuper L."/>
            <person name="LeVine S."/>
            <person name="Liu J."/>
            <person name="Liu X."/>
            <person name="Lokyitsang Y."/>
            <person name="Lokyitsang T."/>
            <person name="Lui A."/>
            <person name="Macdonald J."/>
            <person name="Major J."/>
            <person name="Marabella R."/>
            <person name="Maru K."/>
            <person name="Matthews C."/>
            <person name="McDonough S."/>
            <person name="Mehta T."/>
            <person name="Meldrim J."/>
            <person name="Melnikov A."/>
            <person name="Meneus L."/>
            <person name="Mihalev A."/>
            <person name="Mihova T."/>
            <person name="Miller K."/>
            <person name="Mittelman R."/>
            <person name="Mlenga V."/>
            <person name="Mulrain L."/>
            <person name="Munson G."/>
            <person name="Navidi A."/>
            <person name="Naylor J."/>
            <person name="Nguyen T."/>
            <person name="Nguyen N."/>
            <person name="Nguyen C."/>
            <person name="Nguyen T."/>
            <person name="Nicol R."/>
            <person name="Norbu N."/>
            <person name="Norbu C."/>
            <person name="Novod N."/>
            <person name="Nyima T."/>
            <person name="Olandt P."/>
            <person name="O'Neill B."/>
            <person name="O'Neill K."/>
            <person name="Osman S."/>
            <person name="Oyono L."/>
            <person name="Patti C."/>
            <person name="Perrin D."/>
            <person name="Phunkhang P."/>
            <person name="Pierre F."/>
            <person name="Priest M."/>
            <person name="Rachupka A."/>
            <person name="Raghuraman S."/>
            <person name="Rameau R."/>
            <person name="Ray V."/>
            <person name="Raymond C."/>
            <person name="Rege F."/>
            <person name="Rise C."/>
            <person name="Rogers J."/>
            <person name="Rogov P."/>
            <person name="Sahalie J."/>
            <person name="Settipalli S."/>
            <person name="Sharpe T."/>
            <person name="Shea T."/>
            <person name="Sheehan M."/>
            <person name="Sherpa N."/>
            <person name="Shi J."/>
            <person name="Shih D."/>
            <person name="Sloan J."/>
            <person name="Smith C."/>
            <person name="Sparrow T."/>
            <person name="Stalker J."/>
            <person name="Stange-Thomann N."/>
            <person name="Stavropoulos S."/>
            <person name="Stone C."/>
            <person name="Stone S."/>
            <person name="Sykes S."/>
            <person name="Tchuinga P."/>
            <person name="Tenzing P."/>
            <person name="Tesfaye S."/>
            <person name="Thoulutsang D."/>
            <person name="Thoulutsang Y."/>
            <person name="Topham K."/>
            <person name="Topping I."/>
            <person name="Tsamla T."/>
            <person name="Vassiliev H."/>
            <person name="Venkataraman V."/>
            <person name="Vo A."/>
            <person name="Wangchuk T."/>
            <person name="Wangdi T."/>
            <person name="Weiand M."/>
            <person name="Wilkinson J."/>
            <person name="Wilson A."/>
            <person name="Yadav S."/>
            <person name="Yang S."/>
            <person name="Yang X."/>
            <person name="Young G."/>
            <person name="Yu Q."/>
            <person name="Zainoun J."/>
            <person name="Zembek L."/>
            <person name="Zimmer A."/>
            <person name="Lander E.S."/>
        </authorList>
    </citation>
    <scope>NUCLEOTIDE SEQUENCE [LARGE SCALE GENOMIC DNA]</scope>
    <source>
        <strain>Boxer</strain>
    </source>
</reference>
<reference key="2">
    <citation type="journal article" date="2004" name="IUBMB Life">
        <title>Neuroglobin and cytoglobin: genes, proteins and evolution.</title>
        <authorList>
            <person name="Burmester T."/>
            <person name="Haberkamp M."/>
            <person name="Mitz S."/>
            <person name="Roesner A."/>
            <person name="Schmidt M."/>
            <person name="Ebner B."/>
            <person name="Gerlach F."/>
            <person name="Fuchs C."/>
            <person name="Hankeln T."/>
        </authorList>
    </citation>
    <scope>IDENTIFICATION</scope>
</reference>
<comment type="function">
    <text evidence="2">Monomeric globin with a bis-histidyl six-coordinate heme-iron atom through which it can bind dioxygen, carbon monoxide and nitric oxide. Could help transport oxygen and increase its availability to the metabolically active neuronal tissues, though its low quantity in tissues as well as its high affinity for dioxygen, which may limit its oxygen-releasing ability, argue against it. The ferrous/deoxygenated form exhibits a nitrite reductase activity and it could produce nitric oxide which in turn inhibits cellular respiration in response to hypoxia. In its ferrous/deoxygenated state, it may also exhibit GDI (Guanine nucleotide Dissociation Inhibitor) activity toward heterotrimeric G-alpha proteins, thereby regulating signal transduction to facilitate neuroprotective responses in the wake of hypoxia and associated oxidative stress.</text>
</comment>
<comment type="catalytic activity">
    <reaction evidence="2">
        <text>Fe(III)-heme b-[protein] + nitric oxide + H2O = Fe(II)-heme b-[protein] + nitrite + 2 H(+)</text>
        <dbReference type="Rhea" id="RHEA:77711"/>
        <dbReference type="Rhea" id="RHEA-COMP:18975"/>
        <dbReference type="Rhea" id="RHEA-COMP:18976"/>
        <dbReference type="ChEBI" id="CHEBI:15377"/>
        <dbReference type="ChEBI" id="CHEBI:15378"/>
        <dbReference type="ChEBI" id="CHEBI:16301"/>
        <dbReference type="ChEBI" id="CHEBI:16480"/>
        <dbReference type="ChEBI" id="CHEBI:55376"/>
        <dbReference type="ChEBI" id="CHEBI:60344"/>
    </reaction>
    <physiologicalReaction direction="right-to-left" evidence="2">
        <dbReference type="Rhea" id="RHEA:77713"/>
    </physiologicalReaction>
</comment>
<comment type="subunit">
    <text evidence="1 2">Monomer (By similarity). Homodimer and homotetramer; disulfide-linked. Mainly monomeric but also detected as part of homodimers and homotetramers (By similarity). Interacts with 14-3-3 proteins; regulates the phosphorylation of NGB. Could interact (ferrous form) with G-alpha(i) proteins (GTP-bound form) (By similarity).</text>
</comment>
<comment type="subcellular location">
    <subcellularLocation>
        <location evidence="1">Cytoplasm</location>
        <location evidence="1">Cytosol</location>
    </subcellularLocation>
    <subcellularLocation>
        <location evidence="1">Mitochondrion matrix</location>
    </subcellularLocation>
    <text evidence="1">Enriched in mitochondrial matrix upon oxygen-glucose deprivation.</text>
</comment>
<comment type="PTM">
    <text evidence="2">Phosphorylated during hypoxia by ERK1/ERK2. Phosphorylation regulates the heme pocket hexacoordination preventing the association of His-64 with the heme metal center. Thereby, promotes the access of dioxygen and nitrite to the heme and stimulates the nitrite reductase activity. Phosphorylation during hypoxia is stabilized by 14-3-3 proteins.</text>
</comment>
<comment type="similarity">
    <text evidence="3">Belongs to the globin family.</text>
</comment>
<gene>
    <name evidence="2" type="primary">NGB</name>
</gene>
<organism>
    <name type="scientific">Canis lupus familiaris</name>
    <name type="common">Dog</name>
    <name type="synonym">Canis familiaris</name>
    <dbReference type="NCBI Taxonomy" id="9615"/>
    <lineage>
        <taxon>Eukaryota</taxon>
        <taxon>Metazoa</taxon>
        <taxon>Chordata</taxon>
        <taxon>Craniata</taxon>
        <taxon>Vertebrata</taxon>
        <taxon>Euteleostomi</taxon>
        <taxon>Mammalia</taxon>
        <taxon>Eutheria</taxon>
        <taxon>Laurasiatheria</taxon>
        <taxon>Carnivora</taxon>
        <taxon>Caniformia</taxon>
        <taxon>Canidae</taxon>
        <taxon>Canis</taxon>
    </lineage>
</organism>
<protein>
    <recommendedName>
        <fullName evidence="4">Neuroglobin</fullName>
    </recommendedName>
    <alternativeName>
        <fullName evidence="2">Nitrite reductase</fullName>
        <ecNumber evidence="2">1.7.-.-</ecNumber>
    </alternativeName>
</protein>
<evidence type="ECO:0000250" key="1">
    <source>
        <dbReference type="UniProtKB" id="Q9ER97"/>
    </source>
</evidence>
<evidence type="ECO:0000250" key="2">
    <source>
        <dbReference type="UniProtKB" id="Q9NPG2"/>
    </source>
</evidence>
<evidence type="ECO:0000255" key="3">
    <source>
        <dbReference type="PROSITE-ProRule" id="PRU00238"/>
    </source>
</evidence>
<evidence type="ECO:0000303" key="4">
    <source>
    </source>
</evidence>
<feature type="chain" id="PRO_0000053389" description="Neuroglobin">
    <location>
        <begin position="1"/>
        <end position="151"/>
    </location>
</feature>
<feature type="domain" description="Globin" evidence="3">
    <location>
        <begin position="1"/>
        <end position="149"/>
    </location>
</feature>
<feature type="binding site" description="distal binding residue; reversible" evidence="2 3">
    <location>
        <position position="64"/>
    </location>
    <ligand>
        <name>heme b</name>
        <dbReference type="ChEBI" id="CHEBI:60344"/>
    </ligand>
    <ligandPart>
        <name>Fe</name>
        <dbReference type="ChEBI" id="CHEBI:18248"/>
    </ligandPart>
</feature>
<feature type="binding site" description="proximal binding residue" evidence="2 3">
    <location>
        <position position="96"/>
    </location>
    <ligand>
        <name>heme b</name>
        <dbReference type="ChEBI" id="CHEBI:60344"/>
    </ligand>
    <ligandPart>
        <name>Fe</name>
        <dbReference type="ChEBI" id="CHEBI:18248"/>
    </ligandPart>
</feature>
<keyword id="KW-0963">Cytoplasm</keyword>
<keyword id="KW-1015">Disulfide bond</keyword>
<keyword id="KW-0349">Heme</keyword>
<keyword id="KW-0408">Iron</keyword>
<keyword id="KW-0479">Metal-binding</keyword>
<keyword id="KW-0496">Mitochondrion</keyword>
<keyword id="KW-0560">Oxidoreductase</keyword>
<keyword id="KW-1185">Reference proteome</keyword>